<dbReference type="EMBL" id="AP009247">
    <property type="protein sequence ID" value="BAF62040.1"/>
    <property type="molecule type" value="Genomic_DNA"/>
</dbReference>
<dbReference type="RefSeq" id="WP_011930309.1">
    <property type="nucleotide sequence ID" value="NC_009465.1"/>
</dbReference>
<dbReference type="SMR" id="A5CVI2"/>
<dbReference type="STRING" id="412965.COSY_0941"/>
<dbReference type="KEGG" id="vok:COSY_0941"/>
<dbReference type="eggNOG" id="COG0706">
    <property type="taxonomic scope" value="Bacteria"/>
</dbReference>
<dbReference type="HOGENOM" id="CLU_016535_3_0_6"/>
<dbReference type="OrthoDB" id="9780552at2"/>
<dbReference type="Proteomes" id="UP000000247">
    <property type="component" value="Chromosome"/>
</dbReference>
<dbReference type="GO" id="GO:0005886">
    <property type="term" value="C:plasma membrane"/>
    <property type="evidence" value="ECO:0007669"/>
    <property type="project" value="UniProtKB-SubCell"/>
</dbReference>
<dbReference type="GO" id="GO:0032977">
    <property type="term" value="F:membrane insertase activity"/>
    <property type="evidence" value="ECO:0007669"/>
    <property type="project" value="InterPro"/>
</dbReference>
<dbReference type="GO" id="GO:0051205">
    <property type="term" value="P:protein insertion into membrane"/>
    <property type="evidence" value="ECO:0007669"/>
    <property type="project" value="TreeGrafter"/>
</dbReference>
<dbReference type="GO" id="GO:0015031">
    <property type="term" value="P:protein transport"/>
    <property type="evidence" value="ECO:0007669"/>
    <property type="project" value="UniProtKB-KW"/>
</dbReference>
<dbReference type="CDD" id="cd20070">
    <property type="entry name" value="5TM_YidC_Alb3"/>
    <property type="match status" value="1"/>
</dbReference>
<dbReference type="CDD" id="cd19961">
    <property type="entry name" value="EcYidC-like_peri"/>
    <property type="match status" value="1"/>
</dbReference>
<dbReference type="Gene3D" id="2.70.98.90">
    <property type="match status" value="1"/>
</dbReference>
<dbReference type="HAMAP" id="MF_01810">
    <property type="entry name" value="YidC_type1"/>
    <property type="match status" value="1"/>
</dbReference>
<dbReference type="InterPro" id="IPR019998">
    <property type="entry name" value="Membr_insert_YidC"/>
</dbReference>
<dbReference type="InterPro" id="IPR028053">
    <property type="entry name" value="Membr_insert_YidC_N"/>
</dbReference>
<dbReference type="InterPro" id="IPR001708">
    <property type="entry name" value="YidC/ALB3/OXA1/COX18"/>
</dbReference>
<dbReference type="InterPro" id="IPR028055">
    <property type="entry name" value="YidC/Oxa/ALB_C"/>
</dbReference>
<dbReference type="InterPro" id="IPR047196">
    <property type="entry name" value="YidC_ALB_C"/>
</dbReference>
<dbReference type="InterPro" id="IPR038221">
    <property type="entry name" value="YidC_periplasmic_sf"/>
</dbReference>
<dbReference type="NCBIfam" id="NF002352">
    <property type="entry name" value="PRK01318.1-3"/>
    <property type="match status" value="1"/>
</dbReference>
<dbReference type="NCBIfam" id="TIGR03593">
    <property type="entry name" value="yidC_nterm"/>
    <property type="match status" value="1"/>
</dbReference>
<dbReference type="NCBIfam" id="TIGR03592">
    <property type="entry name" value="yidC_oxa1_cterm"/>
    <property type="match status" value="1"/>
</dbReference>
<dbReference type="PANTHER" id="PTHR12428:SF65">
    <property type="entry name" value="CYTOCHROME C OXIDASE ASSEMBLY PROTEIN COX18, MITOCHONDRIAL"/>
    <property type="match status" value="1"/>
</dbReference>
<dbReference type="PANTHER" id="PTHR12428">
    <property type="entry name" value="OXA1"/>
    <property type="match status" value="1"/>
</dbReference>
<dbReference type="Pfam" id="PF02096">
    <property type="entry name" value="60KD_IMP"/>
    <property type="match status" value="1"/>
</dbReference>
<dbReference type="Pfam" id="PF14849">
    <property type="entry name" value="YidC_periplas"/>
    <property type="match status" value="1"/>
</dbReference>
<dbReference type="PRINTS" id="PR00701">
    <property type="entry name" value="60KDINNERMP"/>
</dbReference>
<dbReference type="PRINTS" id="PR01900">
    <property type="entry name" value="YIDCPROTEIN"/>
</dbReference>
<evidence type="ECO:0000255" key="1">
    <source>
        <dbReference type="HAMAP-Rule" id="MF_01810"/>
    </source>
</evidence>
<reference key="1">
    <citation type="journal article" date="2007" name="Curr. Biol.">
        <title>Reduced genome of the thioautotrophic intracellular symbiont in a deep-sea clam, Calyptogena okutanii.</title>
        <authorList>
            <person name="Kuwahara H."/>
            <person name="Yoshida T."/>
            <person name="Takaki Y."/>
            <person name="Shimamura S."/>
            <person name="Nishi S."/>
            <person name="Harada M."/>
            <person name="Matsuyama K."/>
            <person name="Takishita K."/>
            <person name="Kawato M."/>
            <person name="Uematsu K."/>
            <person name="Fujiwara Y."/>
            <person name="Sato T."/>
            <person name="Kato C."/>
            <person name="Kitagawa M."/>
            <person name="Kato I."/>
            <person name="Maruyama T."/>
        </authorList>
    </citation>
    <scope>NUCLEOTIDE SEQUENCE [LARGE SCALE GENOMIC DNA]</scope>
    <source>
        <strain>HA</strain>
    </source>
</reference>
<organism>
    <name type="scientific">Vesicomyosocius okutanii subsp. Calyptogena okutanii (strain HA)</name>
    <dbReference type="NCBI Taxonomy" id="412965"/>
    <lineage>
        <taxon>Bacteria</taxon>
        <taxon>Pseudomonadati</taxon>
        <taxon>Pseudomonadota</taxon>
        <taxon>Gammaproteobacteria</taxon>
        <taxon>Candidatus Pseudothioglobaceae</taxon>
        <taxon>Candidatus Vesicomyosocius</taxon>
    </lineage>
</organism>
<sequence length="541" mass="62441">MNNQKFFLIIAIFLSIFLLWDKWEITHTIDKNNNLISQTKIKNTSTINNSLTNQNLDIPSVTNRNNKLDLPNTDTKNQIPFTTVKTDLLTLEISHKGGTIQNAWLNDYPIEIDSEQKFQLLSDRTGKIFQAQSGLLPQGKMPTHHSIFSSKNIYYQMDGNNLVVPFTWKSENGIIVNKRYHFNKNSYVVGIDYQITNTTNNTLHITSYTQLIRNIPDQDNMIMPTYTGGARFNDQDVYEKIEFEDFDDQPKTSYKGGWMAMIEHYFFVAVIPNLNQIHTYSSKIINDKYLLTVVNPELSIAPGATKTIINSNLYIGPKEQSHIDNVAPGLDKTVDYGILFIIAKPLSELLNWIYSIIHSWGYSIIILTLLIKLAFYKLSEKSYRSMAGMRQLAPRLKKLKETYGDNKQKLGKKTMELYKKEKINPASGCLPILVQIPVFISLYWVLLEMVELRQAPFWYLTDLSAPDPYYILPLIMGISMFIQQKLNPPPPDPIQAKIMMALPFVFTIFFLWFPSGLVLYWMINNILSITQQWVINKRINN</sequence>
<protein>
    <recommendedName>
        <fullName evidence="1">Membrane protein insertase YidC</fullName>
    </recommendedName>
    <alternativeName>
        <fullName evidence="1">Foldase YidC</fullName>
    </alternativeName>
    <alternativeName>
        <fullName evidence="1">Membrane integrase YidC</fullName>
    </alternativeName>
    <alternativeName>
        <fullName evidence="1">Membrane protein YidC</fullName>
    </alternativeName>
</protein>
<proteinExistence type="inferred from homology"/>
<feature type="chain" id="PRO_1000070186" description="Membrane protein insertase YidC">
    <location>
        <begin position="1"/>
        <end position="541"/>
    </location>
</feature>
<feature type="transmembrane region" description="Helical" evidence="1">
    <location>
        <begin position="6"/>
        <end position="26"/>
    </location>
</feature>
<feature type="transmembrane region" description="Helical" evidence="1">
    <location>
        <begin position="356"/>
        <end position="376"/>
    </location>
</feature>
<feature type="transmembrane region" description="Helical" evidence="1">
    <location>
        <begin position="430"/>
        <end position="450"/>
    </location>
</feature>
<feature type="transmembrane region" description="Helical" evidence="1">
    <location>
        <begin position="463"/>
        <end position="483"/>
    </location>
</feature>
<feature type="transmembrane region" description="Helical" evidence="1">
    <location>
        <begin position="498"/>
        <end position="518"/>
    </location>
</feature>
<keyword id="KW-0997">Cell inner membrane</keyword>
<keyword id="KW-1003">Cell membrane</keyword>
<keyword id="KW-0143">Chaperone</keyword>
<keyword id="KW-0472">Membrane</keyword>
<keyword id="KW-0653">Protein transport</keyword>
<keyword id="KW-1185">Reference proteome</keyword>
<keyword id="KW-0812">Transmembrane</keyword>
<keyword id="KW-1133">Transmembrane helix</keyword>
<keyword id="KW-0813">Transport</keyword>
<accession>A5CVI2</accession>
<name>YIDC_VESOH</name>
<gene>
    <name evidence="1" type="primary">yidC</name>
    <name type="ordered locus">COSY_0941</name>
</gene>
<comment type="function">
    <text evidence="1">Required for the insertion and/or proper folding and/or complex formation of integral membrane proteins into the membrane. Involved in integration of membrane proteins that insert both dependently and independently of the Sec translocase complex, as well as at least some lipoproteins. Aids folding of multispanning membrane proteins.</text>
</comment>
<comment type="subunit">
    <text evidence="1">Interacts with the Sec translocase complex via SecD. Specifically interacts with transmembrane segments of nascent integral membrane proteins during membrane integration.</text>
</comment>
<comment type="subcellular location">
    <subcellularLocation>
        <location evidence="1">Cell inner membrane</location>
        <topology evidence="1">Multi-pass membrane protein</topology>
    </subcellularLocation>
</comment>
<comment type="similarity">
    <text evidence="1">Belongs to the OXA1/ALB3/YidC family. Type 1 subfamily.</text>
</comment>